<feature type="chain" id="PRO_0000335461" description="Translation initiation factor IF-2">
    <location>
        <begin position="1"/>
        <end position="858"/>
    </location>
</feature>
<feature type="domain" description="tr-type G">
    <location>
        <begin position="361"/>
        <end position="530"/>
    </location>
</feature>
<feature type="region of interest" description="Disordered" evidence="3">
    <location>
        <begin position="59"/>
        <end position="147"/>
    </location>
</feature>
<feature type="region of interest" description="G1" evidence="1">
    <location>
        <begin position="370"/>
        <end position="377"/>
    </location>
</feature>
<feature type="region of interest" description="G2" evidence="1">
    <location>
        <begin position="395"/>
        <end position="399"/>
    </location>
</feature>
<feature type="region of interest" description="G3" evidence="1">
    <location>
        <begin position="416"/>
        <end position="419"/>
    </location>
</feature>
<feature type="region of interest" description="G4" evidence="1">
    <location>
        <begin position="470"/>
        <end position="473"/>
    </location>
</feature>
<feature type="region of interest" description="G5" evidence="1">
    <location>
        <begin position="506"/>
        <end position="508"/>
    </location>
</feature>
<feature type="binding site" evidence="2">
    <location>
        <begin position="370"/>
        <end position="377"/>
    </location>
    <ligand>
        <name>GTP</name>
        <dbReference type="ChEBI" id="CHEBI:37565"/>
    </ligand>
</feature>
<feature type="binding site" evidence="2">
    <location>
        <begin position="416"/>
        <end position="420"/>
    </location>
    <ligand>
        <name>GTP</name>
        <dbReference type="ChEBI" id="CHEBI:37565"/>
    </ligand>
</feature>
<feature type="binding site" evidence="2">
    <location>
        <begin position="470"/>
        <end position="473"/>
    </location>
    <ligand>
        <name>GTP</name>
        <dbReference type="ChEBI" id="CHEBI:37565"/>
    </ligand>
</feature>
<comment type="function">
    <text evidence="2">One of the essential components for the initiation of protein synthesis. Protects formylmethionyl-tRNA from spontaneous hydrolysis and promotes its binding to the 30S ribosomal subunits. Also involved in the hydrolysis of GTP during the formation of the 70S ribosomal complex.</text>
</comment>
<comment type="subcellular location">
    <subcellularLocation>
        <location evidence="2">Cytoplasm</location>
    </subcellularLocation>
</comment>
<comment type="similarity">
    <text evidence="2">Belongs to the TRAFAC class translation factor GTPase superfamily. Classic translation factor GTPase family. IF-2 subfamily.</text>
</comment>
<organism>
    <name type="scientific">Caldicellulosiruptor saccharolyticus (strain ATCC 43494 / DSM 8903 / Tp8T 6331)</name>
    <dbReference type="NCBI Taxonomy" id="351627"/>
    <lineage>
        <taxon>Bacteria</taxon>
        <taxon>Bacillati</taxon>
        <taxon>Bacillota</taxon>
        <taxon>Bacillota incertae sedis</taxon>
        <taxon>Caldicellulosiruptorales</taxon>
        <taxon>Caldicellulosiruptoraceae</taxon>
        <taxon>Caldicellulosiruptor</taxon>
    </lineage>
</organism>
<sequence length="858" mass="96947">MTNKLRIYEFAKLLEIQNKDLMDILNKLNIEHKNHMSALEENDINLVLEYILQEKEKEKEHAEKRRERLPSHKEGRSGERQAKTFDEKKHTRHGEKASHPYDKRGEQKLQQKSQQDVRQKFDREKRERHQEAIAKESGKKLEGQERKAVVHDQKVVELFPQQEPEKRQAAKPKYEVAKEQKIEKRYQDKVAAKQKTEKATKHRKQLFNVDELTQEEVTVDREELEKIDKEVEDTLLEEEYLQEKHVRRGKKEKLKKRSKEQKEVLKLQTKTVQEEKKEEIVKIPEKITVGEFANLIGKPAAEVIKKLIMLGVMANINQEIDFDVASLIAEDYGFKVEKEIIKSEEEILLEDQEDPEETLQPRPPVVVVMGHVDHGKTSLLDAIRNTNVTEKEAGGITQHIGASVVEVNGRKITFLDTPGHEAFTAMRARGAQVTDIAVLVVAADDGVMPQTVEAINHAKAANVTIIVAINKIDKPEANPERVKQQLSEYGLIPEEWGGDTVFVNVSAKKKIGIDHLLEMILLVADLLELKANPNRPARGRVIEAKLDKGRGPVATVLVQKGTLKVGDYVVVGSTWGRVRAMIDDKGQRIKEAGPSMPVEILGLEDVPTAGDELVCVKDEKTAKTIAQIRQERLKEEKMQQSKISLDELFERIQKGQLKELRVIIKADVQGSVEALKSAIERLSNDKVTVKVIHAAVGAITESDVTLASASDAIIIGFNVRPEVGAMSLAEKEKVDIRMYRIIYDVINDIKAAMKGLLEPVYKEVIIGHAEVRQIFKSSSVGTIAGCYVLDGKITRTSNARIIRDGVVVYEGKLASLKRFKDDVREVAAGYECGMTFEKFNDIKEGDIVEAFEMQKVES</sequence>
<gene>
    <name evidence="2" type="primary">infB</name>
    <name type="ordered locus">Csac_2070</name>
</gene>
<reference key="1">
    <citation type="submission" date="2007-04" db="EMBL/GenBank/DDBJ databases">
        <title>Genome sequence of the thermophilic hydrogen-producing bacterium Caldicellulosiruptor saccharolyticus DSM 8903.</title>
        <authorList>
            <person name="Copeland A."/>
            <person name="Lucas S."/>
            <person name="Lapidus A."/>
            <person name="Barry K."/>
            <person name="Detter J.C."/>
            <person name="Glavina del Rio T."/>
            <person name="Hammon N."/>
            <person name="Israni S."/>
            <person name="Dalin E."/>
            <person name="Tice H."/>
            <person name="Pitluck S."/>
            <person name="Kiss H."/>
            <person name="Brettin T."/>
            <person name="Bruce D."/>
            <person name="Han C."/>
            <person name="Schmutz J."/>
            <person name="Larimer F."/>
            <person name="Land M."/>
            <person name="Hauser L."/>
            <person name="Kyrpides N."/>
            <person name="Lykidis A."/>
            <person name="van de Werken H.J.G."/>
            <person name="Verhaart M.R.A."/>
            <person name="VanFossen A.L."/>
            <person name="Lewis D.L."/>
            <person name="Nichols J.D."/>
            <person name="Goorissen H.P."/>
            <person name="van Niel E.W.J."/>
            <person name="Stams F.J.M."/>
            <person name="Willquist K.U."/>
            <person name="Ward D.E."/>
            <person name="van der Oost J."/>
            <person name="Kelly R.M."/>
            <person name="Kengen S.M.W."/>
            <person name="Richardson P."/>
        </authorList>
    </citation>
    <scope>NUCLEOTIDE SEQUENCE [LARGE SCALE GENOMIC DNA]</scope>
    <source>
        <strain>ATCC 43494 / DSM 8903 / Tp8T 6331</strain>
    </source>
</reference>
<accession>A4XL70</accession>
<dbReference type="EMBL" id="CP000679">
    <property type="protein sequence ID" value="ABP67655.1"/>
    <property type="molecule type" value="Genomic_DNA"/>
</dbReference>
<dbReference type="RefSeq" id="WP_011917590.1">
    <property type="nucleotide sequence ID" value="NC_009437.1"/>
</dbReference>
<dbReference type="SMR" id="A4XL70"/>
<dbReference type="STRING" id="351627.Csac_2070"/>
<dbReference type="KEGG" id="csc:Csac_2070"/>
<dbReference type="eggNOG" id="COG0532">
    <property type="taxonomic scope" value="Bacteria"/>
</dbReference>
<dbReference type="HOGENOM" id="CLU_006301_5_1_9"/>
<dbReference type="OrthoDB" id="9811804at2"/>
<dbReference type="Proteomes" id="UP000000256">
    <property type="component" value="Chromosome"/>
</dbReference>
<dbReference type="GO" id="GO:0005829">
    <property type="term" value="C:cytosol"/>
    <property type="evidence" value="ECO:0007669"/>
    <property type="project" value="TreeGrafter"/>
</dbReference>
<dbReference type="GO" id="GO:0005525">
    <property type="term" value="F:GTP binding"/>
    <property type="evidence" value="ECO:0007669"/>
    <property type="project" value="UniProtKB-KW"/>
</dbReference>
<dbReference type="GO" id="GO:0003924">
    <property type="term" value="F:GTPase activity"/>
    <property type="evidence" value="ECO:0007669"/>
    <property type="project" value="UniProtKB-UniRule"/>
</dbReference>
<dbReference type="GO" id="GO:0003743">
    <property type="term" value="F:translation initiation factor activity"/>
    <property type="evidence" value="ECO:0007669"/>
    <property type="project" value="UniProtKB-UniRule"/>
</dbReference>
<dbReference type="CDD" id="cd01887">
    <property type="entry name" value="IF2_eIF5B"/>
    <property type="match status" value="1"/>
</dbReference>
<dbReference type="CDD" id="cd03702">
    <property type="entry name" value="IF2_mtIF2_II"/>
    <property type="match status" value="1"/>
</dbReference>
<dbReference type="CDD" id="cd03692">
    <property type="entry name" value="mtIF2_IVc"/>
    <property type="match status" value="1"/>
</dbReference>
<dbReference type="FunFam" id="2.40.30.10:FF:000007">
    <property type="entry name" value="Translation initiation factor IF-2"/>
    <property type="match status" value="1"/>
</dbReference>
<dbReference type="FunFam" id="2.40.30.10:FF:000008">
    <property type="entry name" value="Translation initiation factor IF-2"/>
    <property type="match status" value="1"/>
</dbReference>
<dbReference type="FunFam" id="3.40.50.10050:FF:000001">
    <property type="entry name" value="Translation initiation factor IF-2"/>
    <property type="match status" value="1"/>
</dbReference>
<dbReference type="FunFam" id="3.40.50.300:FF:000019">
    <property type="entry name" value="Translation initiation factor IF-2"/>
    <property type="match status" value="1"/>
</dbReference>
<dbReference type="Gene3D" id="1.10.10.2480">
    <property type="match status" value="1"/>
</dbReference>
<dbReference type="Gene3D" id="3.40.50.300">
    <property type="entry name" value="P-loop containing nucleotide triphosphate hydrolases"/>
    <property type="match status" value="1"/>
</dbReference>
<dbReference type="Gene3D" id="2.40.30.10">
    <property type="entry name" value="Translation factors"/>
    <property type="match status" value="2"/>
</dbReference>
<dbReference type="Gene3D" id="3.40.50.10050">
    <property type="entry name" value="Translation initiation factor IF- 2, domain 3"/>
    <property type="match status" value="1"/>
</dbReference>
<dbReference type="HAMAP" id="MF_00100_B">
    <property type="entry name" value="IF_2_B"/>
    <property type="match status" value="1"/>
</dbReference>
<dbReference type="InterPro" id="IPR053905">
    <property type="entry name" value="EF-G-like_DII"/>
</dbReference>
<dbReference type="InterPro" id="IPR044145">
    <property type="entry name" value="IF2_II"/>
</dbReference>
<dbReference type="InterPro" id="IPR006847">
    <property type="entry name" value="IF2_N"/>
</dbReference>
<dbReference type="InterPro" id="IPR027417">
    <property type="entry name" value="P-loop_NTPase"/>
</dbReference>
<dbReference type="InterPro" id="IPR005225">
    <property type="entry name" value="Small_GTP-bd"/>
</dbReference>
<dbReference type="InterPro" id="IPR000795">
    <property type="entry name" value="T_Tr_GTP-bd_dom"/>
</dbReference>
<dbReference type="InterPro" id="IPR000178">
    <property type="entry name" value="TF_IF2_bacterial-like"/>
</dbReference>
<dbReference type="InterPro" id="IPR015760">
    <property type="entry name" value="TIF_IF2"/>
</dbReference>
<dbReference type="InterPro" id="IPR023115">
    <property type="entry name" value="TIF_IF2_dom3"/>
</dbReference>
<dbReference type="InterPro" id="IPR036925">
    <property type="entry name" value="TIF_IF2_dom3_sf"/>
</dbReference>
<dbReference type="InterPro" id="IPR009000">
    <property type="entry name" value="Transl_B-barrel_sf"/>
</dbReference>
<dbReference type="NCBIfam" id="TIGR00487">
    <property type="entry name" value="IF-2"/>
    <property type="match status" value="1"/>
</dbReference>
<dbReference type="NCBIfam" id="TIGR00231">
    <property type="entry name" value="small_GTP"/>
    <property type="match status" value="1"/>
</dbReference>
<dbReference type="PANTHER" id="PTHR43381:SF5">
    <property type="entry name" value="TR-TYPE G DOMAIN-CONTAINING PROTEIN"/>
    <property type="match status" value="1"/>
</dbReference>
<dbReference type="PANTHER" id="PTHR43381">
    <property type="entry name" value="TRANSLATION INITIATION FACTOR IF-2-RELATED"/>
    <property type="match status" value="1"/>
</dbReference>
<dbReference type="Pfam" id="PF22042">
    <property type="entry name" value="EF-G_D2"/>
    <property type="match status" value="1"/>
</dbReference>
<dbReference type="Pfam" id="PF00009">
    <property type="entry name" value="GTP_EFTU"/>
    <property type="match status" value="1"/>
</dbReference>
<dbReference type="Pfam" id="PF11987">
    <property type="entry name" value="IF-2"/>
    <property type="match status" value="1"/>
</dbReference>
<dbReference type="Pfam" id="PF04760">
    <property type="entry name" value="IF2_N"/>
    <property type="match status" value="2"/>
</dbReference>
<dbReference type="SUPFAM" id="SSF52156">
    <property type="entry name" value="Initiation factor IF2/eIF5b, domain 3"/>
    <property type="match status" value="1"/>
</dbReference>
<dbReference type="SUPFAM" id="SSF52540">
    <property type="entry name" value="P-loop containing nucleoside triphosphate hydrolases"/>
    <property type="match status" value="1"/>
</dbReference>
<dbReference type="SUPFAM" id="SSF50447">
    <property type="entry name" value="Translation proteins"/>
    <property type="match status" value="2"/>
</dbReference>
<dbReference type="PROSITE" id="PS51722">
    <property type="entry name" value="G_TR_2"/>
    <property type="match status" value="1"/>
</dbReference>
<dbReference type="PROSITE" id="PS01176">
    <property type="entry name" value="IF2"/>
    <property type="match status" value="1"/>
</dbReference>
<protein>
    <recommendedName>
        <fullName evidence="2">Translation initiation factor IF-2</fullName>
    </recommendedName>
</protein>
<name>IF2_CALS8</name>
<evidence type="ECO:0000250" key="1"/>
<evidence type="ECO:0000255" key="2">
    <source>
        <dbReference type="HAMAP-Rule" id="MF_00100"/>
    </source>
</evidence>
<evidence type="ECO:0000256" key="3">
    <source>
        <dbReference type="SAM" id="MobiDB-lite"/>
    </source>
</evidence>
<proteinExistence type="inferred from homology"/>
<keyword id="KW-0963">Cytoplasm</keyword>
<keyword id="KW-0342">GTP-binding</keyword>
<keyword id="KW-0396">Initiation factor</keyword>
<keyword id="KW-0547">Nucleotide-binding</keyword>
<keyword id="KW-0648">Protein biosynthesis</keyword>